<organism>
    <name type="scientific">Baumannia cicadellinicola subsp. Homalodisca coagulata</name>
    <dbReference type="NCBI Taxonomy" id="374463"/>
    <lineage>
        <taxon>Bacteria</taxon>
        <taxon>Pseudomonadati</taxon>
        <taxon>Pseudomonadota</taxon>
        <taxon>Gammaproteobacteria</taxon>
        <taxon>Candidatus Palibaumannia</taxon>
    </lineage>
</organism>
<comment type="function">
    <text evidence="1">Peptide chain release factor 1 directs the termination of translation in response to the peptide chain termination codons UAG and UAA.</text>
</comment>
<comment type="subcellular location">
    <subcellularLocation>
        <location evidence="1">Cytoplasm</location>
    </subcellularLocation>
</comment>
<comment type="PTM">
    <text evidence="1">Methylated by PrmC. Methylation increases the termination efficiency of RF1.</text>
</comment>
<comment type="similarity">
    <text evidence="1">Belongs to the prokaryotic/mitochondrial release factor family.</text>
</comment>
<reference key="1">
    <citation type="journal article" date="2006" name="PLoS Biol.">
        <title>Metabolic complementarity and genomics of the dual bacterial symbiosis of sharpshooters.</title>
        <authorList>
            <person name="Wu D."/>
            <person name="Daugherty S.C."/>
            <person name="Van Aken S.E."/>
            <person name="Pai G.H."/>
            <person name="Watkins K.L."/>
            <person name="Khouri H."/>
            <person name="Tallon L.J."/>
            <person name="Zaborsky J.M."/>
            <person name="Dunbar H.E."/>
            <person name="Tran P.L."/>
            <person name="Moran N.A."/>
            <person name="Eisen J.A."/>
        </authorList>
    </citation>
    <scope>NUCLEOTIDE SEQUENCE [LARGE SCALE GENOMIC DNA]</scope>
</reference>
<keyword id="KW-0963">Cytoplasm</keyword>
<keyword id="KW-0488">Methylation</keyword>
<keyword id="KW-0648">Protein biosynthesis</keyword>
<keyword id="KW-1185">Reference proteome</keyword>
<feature type="chain" id="PRO_0000263236" description="Peptide chain release factor 1">
    <location>
        <begin position="1"/>
        <end position="366"/>
    </location>
</feature>
<feature type="modified residue" description="N5-methylglutamine" evidence="1">
    <location>
        <position position="239"/>
    </location>
</feature>
<accession>Q1LTH5</accession>
<evidence type="ECO:0000255" key="1">
    <source>
        <dbReference type="HAMAP-Rule" id="MF_00093"/>
    </source>
</evidence>
<protein>
    <recommendedName>
        <fullName evidence="1">Peptide chain release factor 1</fullName>
        <shortName evidence="1">RF-1</shortName>
    </recommendedName>
</protein>
<proteinExistence type="inferred from homology"/>
<sequence>MKPSIITKLKVLQERYYEVETLLGNSEVAKDRERLRILSKEYAQLTDIHTCFQHWQQVQENISITGPMLEDPEMHDMVQDELNKLHSLLSTLEQQLLTLLLQKDSNKDPNDERGCFIEVRAGTGGDEAALFAGDLFRMYSRYAEIHSWQIDVISASSGPHGGYKEIIVKMSHDNAYGQLKFESGGHRVQRIPETESQGRIHTSSCTVAVIPDILHAELPEISPEDIRVDTFRSSGAGGQHVNTTESAIRITHLPTGLVVECQDERSQHKNKAKAMAVLSARLRAAEAQCRQQEESCMRRNLLGSGYRSDRIRTYNFPQGRITDHRIGFTTYRLNEVIEGKLEILLQPIIQEYQTNQLIALSESEIT</sequence>
<dbReference type="EMBL" id="CP000238">
    <property type="protein sequence ID" value="ABF14173.1"/>
    <property type="molecule type" value="Genomic_DNA"/>
</dbReference>
<dbReference type="RefSeq" id="WP_011520472.1">
    <property type="nucleotide sequence ID" value="NC_007984.1"/>
</dbReference>
<dbReference type="SMR" id="Q1LTH5"/>
<dbReference type="STRING" id="374463.BCI_0290"/>
<dbReference type="KEGG" id="bci:BCI_0290"/>
<dbReference type="HOGENOM" id="CLU_036856_0_1_6"/>
<dbReference type="OrthoDB" id="9806673at2"/>
<dbReference type="Proteomes" id="UP000002427">
    <property type="component" value="Chromosome"/>
</dbReference>
<dbReference type="GO" id="GO:0005737">
    <property type="term" value="C:cytoplasm"/>
    <property type="evidence" value="ECO:0007669"/>
    <property type="project" value="UniProtKB-SubCell"/>
</dbReference>
<dbReference type="GO" id="GO:0016149">
    <property type="term" value="F:translation release factor activity, codon specific"/>
    <property type="evidence" value="ECO:0007669"/>
    <property type="project" value="UniProtKB-UniRule"/>
</dbReference>
<dbReference type="FunFam" id="3.30.160.20:FF:000004">
    <property type="entry name" value="Peptide chain release factor 1"/>
    <property type="match status" value="1"/>
</dbReference>
<dbReference type="FunFam" id="3.30.70.1660:FF:000002">
    <property type="entry name" value="Peptide chain release factor 1"/>
    <property type="match status" value="1"/>
</dbReference>
<dbReference type="FunFam" id="3.30.70.1660:FF:000004">
    <property type="entry name" value="Peptide chain release factor 1"/>
    <property type="match status" value="1"/>
</dbReference>
<dbReference type="Gene3D" id="3.30.160.20">
    <property type="match status" value="1"/>
</dbReference>
<dbReference type="Gene3D" id="3.30.70.1660">
    <property type="match status" value="1"/>
</dbReference>
<dbReference type="Gene3D" id="6.10.140.1950">
    <property type="match status" value="1"/>
</dbReference>
<dbReference type="HAMAP" id="MF_00093">
    <property type="entry name" value="Rel_fac_1"/>
    <property type="match status" value="1"/>
</dbReference>
<dbReference type="InterPro" id="IPR005139">
    <property type="entry name" value="PCRF"/>
</dbReference>
<dbReference type="InterPro" id="IPR000352">
    <property type="entry name" value="Pep_chain_release_fac_I"/>
</dbReference>
<dbReference type="InterPro" id="IPR045853">
    <property type="entry name" value="Pep_chain_release_fac_I_sf"/>
</dbReference>
<dbReference type="InterPro" id="IPR050057">
    <property type="entry name" value="Prokaryotic/Mito_RF"/>
</dbReference>
<dbReference type="InterPro" id="IPR004373">
    <property type="entry name" value="RF-1"/>
</dbReference>
<dbReference type="NCBIfam" id="TIGR00019">
    <property type="entry name" value="prfA"/>
    <property type="match status" value="1"/>
</dbReference>
<dbReference type="NCBIfam" id="NF001859">
    <property type="entry name" value="PRK00591.1"/>
    <property type="match status" value="1"/>
</dbReference>
<dbReference type="PANTHER" id="PTHR43804">
    <property type="entry name" value="LD18447P"/>
    <property type="match status" value="1"/>
</dbReference>
<dbReference type="PANTHER" id="PTHR43804:SF7">
    <property type="entry name" value="LD18447P"/>
    <property type="match status" value="1"/>
</dbReference>
<dbReference type="Pfam" id="PF03462">
    <property type="entry name" value="PCRF"/>
    <property type="match status" value="1"/>
</dbReference>
<dbReference type="Pfam" id="PF00472">
    <property type="entry name" value="RF-1"/>
    <property type="match status" value="1"/>
</dbReference>
<dbReference type="SMART" id="SM00937">
    <property type="entry name" value="PCRF"/>
    <property type="match status" value="1"/>
</dbReference>
<dbReference type="SUPFAM" id="SSF75620">
    <property type="entry name" value="Release factor"/>
    <property type="match status" value="1"/>
</dbReference>
<dbReference type="PROSITE" id="PS00745">
    <property type="entry name" value="RF_PROK_I"/>
    <property type="match status" value="1"/>
</dbReference>
<name>RF1_BAUCH</name>
<gene>
    <name evidence="1" type="primary">prfA</name>
    <name type="ordered locus">BCI_0290</name>
</gene>